<sequence length="306" mass="33539">MSNWLVDKLIPSIMRSEVKKSSVPEGLWHKCPSCEAVLYRPELEKTLDVCPKCNHHMRIGARARLNIFLDVEGREELGADLEPVDRLKFRDGKKYKDRLTAAQKQTGEMDALISMSGTLLGMPVVASAFEFSFMGGSMGAIVGERFVRAANYALENRCPMICFAASGGARMQEALISLMQMAKTSAVLARLREEGLPFISVLTDPVYGGVSASLAMLGDVIVAEPKALIGFAGPRVIEQTVREKLPEGFQRSEFLLDHGAIDMIISRSELRPRLGNLLAQMMNLPTPRFVAPVIEPIVVPPAPATI</sequence>
<comment type="function">
    <text evidence="1">Component of the acetyl coenzyme A carboxylase (ACC) complex. Biotin carboxylase (BC) catalyzes the carboxylation of biotin on its carrier protein (BCCP) and then the CO(2) group is transferred by the transcarboxylase to acetyl-CoA to form malonyl-CoA.</text>
</comment>
<comment type="catalytic activity">
    <reaction evidence="1">
        <text>N(6)-carboxybiotinyl-L-lysyl-[protein] + acetyl-CoA = N(6)-biotinyl-L-lysyl-[protein] + malonyl-CoA</text>
        <dbReference type="Rhea" id="RHEA:54728"/>
        <dbReference type="Rhea" id="RHEA-COMP:10505"/>
        <dbReference type="Rhea" id="RHEA-COMP:10506"/>
        <dbReference type="ChEBI" id="CHEBI:57288"/>
        <dbReference type="ChEBI" id="CHEBI:57384"/>
        <dbReference type="ChEBI" id="CHEBI:83144"/>
        <dbReference type="ChEBI" id="CHEBI:83145"/>
        <dbReference type="EC" id="2.1.3.15"/>
    </reaction>
</comment>
<comment type="cofactor">
    <cofactor evidence="1">
        <name>Zn(2+)</name>
        <dbReference type="ChEBI" id="CHEBI:29105"/>
    </cofactor>
    <text evidence="1">Binds 1 zinc ion per subunit.</text>
</comment>
<comment type="pathway">
    <text evidence="1">Lipid metabolism; malonyl-CoA biosynthesis; malonyl-CoA from acetyl-CoA: step 1/1.</text>
</comment>
<comment type="subunit">
    <text evidence="1">Acetyl-CoA carboxylase is a heterohexamer composed of biotin carboxyl carrier protein (AccB), biotin carboxylase (AccC) and two subunits each of ACCase subunit alpha (AccA) and ACCase subunit beta (AccD).</text>
</comment>
<comment type="subcellular location">
    <subcellularLocation>
        <location evidence="1">Cytoplasm</location>
    </subcellularLocation>
</comment>
<comment type="similarity">
    <text evidence="1">Belongs to the AccD/PCCB family.</text>
</comment>
<feature type="chain" id="PRO_0000359045" description="Acetyl-coenzyme A carboxylase carboxyl transferase subunit beta">
    <location>
        <begin position="1"/>
        <end position="306"/>
    </location>
</feature>
<feature type="domain" description="CoA carboxyltransferase N-terminal" evidence="2">
    <location>
        <begin position="27"/>
        <end position="296"/>
    </location>
</feature>
<feature type="zinc finger region" description="C4-type" evidence="1">
    <location>
        <begin position="31"/>
        <end position="53"/>
    </location>
</feature>
<feature type="binding site" evidence="1">
    <location>
        <position position="31"/>
    </location>
    <ligand>
        <name>Zn(2+)</name>
        <dbReference type="ChEBI" id="CHEBI:29105"/>
    </ligand>
</feature>
<feature type="binding site" evidence="1">
    <location>
        <position position="34"/>
    </location>
    <ligand>
        <name>Zn(2+)</name>
        <dbReference type="ChEBI" id="CHEBI:29105"/>
    </ligand>
</feature>
<feature type="binding site" evidence="1">
    <location>
        <position position="50"/>
    </location>
    <ligand>
        <name>Zn(2+)</name>
        <dbReference type="ChEBI" id="CHEBI:29105"/>
    </ligand>
</feature>
<feature type="binding site" evidence="1">
    <location>
        <position position="53"/>
    </location>
    <ligand>
        <name>Zn(2+)</name>
        <dbReference type="ChEBI" id="CHEBI:29105"/>
    </ligand>
</feature>
<proteinExistence type="inferred from homology"/>
<dbReference type="EC" id="2.1.3.15" evidence="1"/>
<dbReference type="EMBL" id="CP000058">
    <property type="protein sequence ID" value="AAZ35500.1"/>
    <property type="molecule type" value="Genomic_DNA"/>
</dbReference>
<dbReference type="RefSeq" id="WP_002552709.1">
    <property type="nucleotide sequence ID" value="NC_005773.3"/>
</dbReference>
<dbReference type="SMR" id="Q48L24"/>
<dbReference type="GeneID" id="61869090"/>
<dbReference type="KEGG" id="psp:PSPPH_1658"/>
<dbReference type="eggNOG" id="COG0777">
    <property type="taxonomic scope" value="Bacteria"/>
</dbReference>
<dbReference type="HOGENOM" id="CLU_015486_1_0_6"/>
<dbReference type="UniPathway" id="UPA00655">
    <property type="reaction ID" value="UER00711"/>
</dbReference>
<dbReference type="Proteomes" id="UP000000551">
    <property type="component" value="Chromosome"/>
</dbReference>
<dbReference type="GO" id="GO:0009329">
    <property type="term" value="C:acetate CoA-transferase complex"/>
    <property type="evidence" value="ECO:0007669"/>
    <property type="project" value="TreeGrafter"/>
</dbReference>
<dbReference type="GO" id="GO:0003989">
    <property type="term" value="F:acetyl-CoA carboxylase activity"/>
    <property type="evidence" value="ECO:0007669"/>
    <property type="project" value="InterPro"/>
</dbReference>
<dbReference type="GO" id="GO:0005524">
    <property type="term" value="F:ATP binding"/>
    <property type="evidence" value="ECO:0007669"/>
    <property type="project" value="UniProtKB-KW"/>
</dbReference>
<dbReference type="GO" id="GO:0016743">
    <property type="term" value="F:carboxyl- or carbamoyltransferase activity"/>
    <property type="evidence" value="ECO:0007669"/>
    <property type="project" value="UniProtKB-UniRule"/>
</dbReference>
<dbReference type="GO" id="GO:0008270">
    <property type="term" value="F:zinc ion binding"/>
    <property type="evidence" value="ECO:0007669"/>
    <property type="project" value="UniProtKB-UniRule"/>
</dbReference>
<dbReference type="GO" id="GO:0006633">
    <property type="term" value="P:fatty acid biosynthetic process"/>
    <property type="evidence" value="ECO:0007669"/>
    <property type="project" value="UniProtKB-KW"/>
</dbReference>
<dbReference type="GO" id="GO:2001295">
    <property type="term" value="P:malonyl-CoA biosynthetic process"/>
    <property type="evidence" value="ECO:0007669"/>
    <property type="project" value="UniProtKB-UniRule"/>
</dbReference>
<dbReference type="Gene3D" id="3.90.226.10">
    <property type="entry name" value="2-enoyl-CoA Hydratase, Chain A, domain 1"/>
    <property type="match status" value="1"/>
</dbReference>
<dbReference type="HAMAP" id="MF_01395">
    <property type="entry name" value="AcetylCoA_CT_beta"/>
    <property type="match status" value="1"/>
</dbReference>
<dbReference type="InterPro" id="IPR034733">
    <property type="entry name" value="AcCoA_carboxyl_beta"/>
</dbReference>
<dbReference type="InterPro" id="IPR000438">
    <property type="entry name" value="Acetyl_CoA_COase_Trfase_b_su"/>
</dbReference>
<dbReference type="InterPro" id="IPR029045">
    <property type="entry name" value="ClpP/crotonase-like_dom_sf"/>
</dbReference>
<dbReference type="InterPro" id="IPR011762">
    <property type="entry name" value="COA_CT_N"/>
</dbReference>
<dbReference type="InterPro" id="IPR041010">
    <property type="entry name" value="Znf-ACC"/>
</dbReference>
<dbReference type="NCBIfam" id="TIGR00515">
    <property type="entry name" value="accD"/>
    <property type="match status" value="1"/>
</dbReference>
<dbReference type="PANTHER" id="PTHR42995">
    <property type="entry name" value="ACETYL-COENZYME A CARBOXYLASE CARBOXYL TRANSFERASE SUBUNIT BETA, CHLOROPLASTIC"/>
    <property type="match status" value="1"/>
</dbReference>
<dbReference type="PANTHER" id="PTHR42995:SF5">
    <property type="entry name" value="ACETYL-COENZYME A CARBOXYLASE CARBOXYL TRANSFERASE SUBUNIT BETA, CHLOROPLASTIC"/>
    <property type="match status" value="1"/>
</dbReference>
<dbReference type="Pfam" id="PF01039">
    <property type="entry name" value="Carboxyl_trans"/>
    <property type="match status" value="1"/>
</dbReference>
<dbReference type="Pfam" id="PF17848">
    <property type="entry name" value="Zn_ribbon_ACC"/>
    <property type="match status" value="1"/>
</dbReference>
<dbReference type="PRINTS" id="PR01070">
    <property type="entry name" value="ACCCTRFRASEB"/>
</dbReference>
<dbReference type="SUPFAM" id="SSF52096">
    <property type="entry name" value="ClpP/crotonase"/>
    <property type="match status" value="1"/>
</dbReference>
<dbReference type="PROSITE" id="PS50980">
    <property type="entry name" value="COA_CT_NTER"/>
    <property type="match status" value="1"/>
</dbReference>
<gene>
    <name evidence="1" type="primary">accD</name>
    <name type="ordered locus">PSPPH_1658</name>
</gene>
<reference key="1">
    <citation type="journal article" date="2005" name="J. Bacteriol.">
        <title>Whole-genome sequence analysis of Pseudomonas syringae pv. phaseolicola 1448A reveals divergence among pathovars in genes involved in virulence and transposition.</title>
        <authorList>
            <person name="Joardar V."/>
            <person name="Lindeberg M."/>
            <person name="Jackson R.W."/>
            <person name="Selengut J."/>
            <person name="Dodson R."/>
            <person name="Brinkac L.M."/>
            <person name="Daugherty S.C."/>
            <person name="DeBoy R.T."/>
            <person name="Durkin A.S."/>
            <person name="Gwinn Giglio M."/>
            <person name="Madupu R."/>
            <person name="Nelson W.C."/>
            <person name="Rosovitz M.J."/>
            <person name="Sullivan S.A."/>
            <person name="Crabtree J."/>
            <person name="Creasy T."/>
            <person name="Davidsen T.M."/>
            <person name="Haft D.H."/>
            <person name="Zafar N."/>
            <person name="Zhou L."/>
            <person name="Halpin R."/>
            <person name="Holley T."/>
            <person name="Khouri H.M."/>
            <person name="Feldblyum T.V."/>
            <person name="White O."/>
            <person name="Fraser C.M."/>
            <person name="Chatterjee A.K."/>
            <person name="Cartinhour S."/>
            <person name="Schneider D."/>
            <person name="Mansfield J.W."/>
            <person name="Collmer A."/>
            <person name="Buell R."/>
        </authorList>
    </citation>
    <scope>NUCLEOTIDE SEQUENCE [LARGE SCALE GENOMIC DNA]</scope>
    <source>
        <strain>1448A / Race 6</strain>
    </source>
</reference>
<name>ACCD_PSE14</name>
<protein>
    <recommendedName>
        <fullName evidence="1">Acetyl-coenzyme A carboxylase carboxyl transferase subunit beta</fullName>
        <shortName evidence="1">ACCase subunit beta</shortName>
        <shortName evidence="1">Acetyl-CoA carboxylase carboxyltransferase subunit beta</shortName>
        <ecNumber evidence="1">2.1.3.15</ecNumber>
    </recommendedName>
</protein>
<evidence type="ECO:0000255" key="1">
    <source>
        <dbReference type="HAMAP-Rule" id="MF_01395"/>
    </source>
</evidence>
<evidence type="ECO:0000255" key="2">
    <source>
        <dbReference type="PROSITE-ProRule" id="PRU01136"/>
    </source>
</evidence>
<accession>Q48L24</accession>
<keyword id="KW-0067">ATP-binding</keyword>
<keyword id="KW-0963">Cytoplasm</keyword>
<keyword id="KW-0275">Fatty acid biosynthesis</keyword>
<keyword id="KW-0276">Fatty acid metabolism</keyword>
<keyword id="KW-0444">Lipid biosynthesis</keyword>
<keyword id="KW-0443">Lipid metabolism</keyword>
<keyword id="KW-0479">Metal-binding</keyword>
<keyword id="KW-0547">Nucleotide-binding</keyword>
<keyword id="KW-0808">Transferase</keyword>
<keyword id="KW-0862">Zinc</keyword>
<keyword id="KW-0863">Zinc-finger</keyword>
<organism>
    <name type="scientific">Pseudomonas savastanoi pv. phaseolicola (strain 1448A / Race 6)</name>
    <name type="common">Pseudomonas syringae pv. phaseolicola (strain 1448A / Race 6)</name>
    <dbReference type="NCBI Taxonomy" id="264730"/>
    <lineage>
        <taxon>Bacteria</taxon>
        <taxon>Pseudomonadati</taxon>
        <taxon>Pseudomonadota</taxon>
        <taxon>Gammaproteobacteria</taxon>
        <taxon>Pseudomonadales</taxon>
        <taxon>Pseudomonadaceae</taxon>
        <taxon>Pseudomonas</taxon>
    </lineage>
</organism>